<name>MURG_STRCO</name>
<sequence>MHVVLAGGGTAGHIEPALALADALRRQDPTVGITALGTERGLETRLVPERGYELALIPAVPLPRKPTPELITVPGRLRGTIKATEQILERTKADAVAGFGGYVALPAYLAAKRLGVPIVVHEANARPGLANKIGSRYAAQVAVSTPDSKLRNSRYIGIPLRRSIATLDRAAARPEARAMFGLDPNLPTLLVTGGSQGARRLNEVIQQVAPWLQQAGIQILHAVGPKNELPQVHQMPGMPPYIPVSYLDRMDLAYAAADMMLCRAGAMTVAELSAVGLPAAYVPLPIGNGEQRLNAQPVVKAGGGLLVDDAELTPEWLQQNVLPVLADPHRLYEMSRAAAEFGRRDADDLLVGMVYEAIAARARR</sequence>
<protein>
    <recommendedName>
        <fullName evidence="1">UDP-N-acetylglucosamine--N-acetylmuramyl-(pentapeptide) pyrophosphoryl-undecaprenol N-acetylglucosamine transferase</fullName>
        <ecNumber evidence="1">2.4.1.227</ecNumber>
    </recommendedName>
    <alternativeName>
        <fullName evidence="1">Undecaprenyl-PP-MurNAc-pentapeptide-UDPGlcNAc GlcNAc transferase</fullName>
    </alternativeName>
</protein>
<keyword id="KW-0131">Cell cycle</keyword>
<keyword id="KW-0132">Cell division</keyword>
<keyword id="KW-1003">Cell membrane</keyword>
<keyword id="KW-0133">Cell shape</keyword>
<keyword id="KW-0961">Cell wall biogenesis/degradation</keyword>
<keyword id="KW-0328">Glycosyltransferase</keyword>
<keyword id="KW-0472">Membrane</keyword>
<keyword id="KW-0573">Peptidoglycan synthesis</keyword>
<keyword id="KW-1185">Reference proteome</keyword>
<keyword id="KW-0808">Transferase</keyword>
<reference key="1">
    <citation type="submission" date="1999-01" db="EMBL/GenBank/DDBJ databases">
        <authorList>
            <person name="Kuennen R.A."/>
            <person name="Stadelmaier B.T."/>
            <person name="McCormick J.R."/>
        </authorList>
    </citation>
    <scope>NUCLEOTIDE SEQUENCE [GENOMIC DNA]</scope>
    <source>
        <strain>A3(2) / NRRL B-16638</strain>
    </source>
</reference>
<reference key="2">
    <citation type="journal article" date="2002" name="Nature">
        <title>Complete genome sequence of the model actinomycete Streptomyces coelicolor A3(2).</title>
        <authorList>
            <person name="Bentley S.D."/>
            <person name="Chater K.F."/>
            <person name="Cerdeno-Tarraga A.-M."/>
            <person name="Challis G.L."/>
            <person name="Thomson N.R."/>
            <person name="James K.D."/>
            <person name="Harris D.E."/>
            <person name="Quail M.A."/>
            <person name="Kieser H."/>
            <person name="Harper D."/>
            <person name="Bateman A."/>
            <person name="Brown S."/>
            <person name="Chandra G."/>
            <person name="Chen C.W."/>
            <person name="Collins M."/>
            <person name="Cronin A."/>
            <person name="Fraser A."/>
            <person name="Goble A."/>
            <person name="Hidalgo J."/>
            <person name="Hornsby T."/>
            <person name="Howarth S."/>
            <person name="Huang C.-H."/>
            <person name="Kieser T."/>
            <person name="Larke L."/>
            <person name="Murphy L.D."/>
            <person name="Oliver K."/>
            <person name="O'Neil S."/>
            <person name="Rabbinowitsch E."/>
            <person name="Rajandream M.A."/>
            <person name="Rutherford K.M."/>
            <person name="Rutter S."/>
            <person name="Seeger K."/>
            <person name="Saunders D."/>
            <person name="Sharp S."/>
            <person name="Squares R."/>
            <person name="Squares S."/>
            <person name="Taylor K."/>
            <person name="Warren T."/>
            <person name="Wietzorrek A."/>
            <person name="Woodward J.R."/>
            <person name="Barrell B.G."/>
            <person name="Parkhill J."/>
            <person name="Hopwood D.A."/>
        </authorList>
    </citation>
    <scope>NUCLEOTIDE SEQUENCE [LARGE SCALE GENOMIC DNA]</scope>
    <source>
        <strain>ATCC BAA-471 / A3(2) / M145</strain>
    </source>
</reference>
<comment type="function">
    <text evidence="1">Cell wall formation. Catalyzes the transfer of a GlcNAc subunit on undecaprenyl-pyrophosphoryl-MurNAc-pentapeptide (lipid intermediate I) to form undecaprenyl-pyrophosphoryl-MurNAc-(pentapeptide)GlcNAc (lipid intermediate II).</text>
</comment>
<comment type="catalytic activity">
    <reaction evidence="1">
        <text>di-trans,octa-cis-undecaprenyl diphospho-N-acetyl-alpha-D-muramoyl-L-alanyl-D-glutamyl-meso-2,6-diaminopimeloyl-D-alanyl-D-alanine + UDP-N-acetyl-alpha-D-glucosamine = di-trans,octa-cis-undecaprenyl diphospho-[N-acetyl-alpha-D-glucosaminyl-(1-&gt;4)]-N-acetyl-alpha-D-muramoyl-L-alanyl-D-glutamyl-meso-2,6-diaminopimeloyl-D-alanyl-D-alanine + UDP + H(+)</text>
        <dbReference type="Rhea" id="RHEA:31227"/>
        <dbReference type="ChEBI" id="CHEBI:15378"/>
        <dbReference type="ChEBI" id="CHEBI:57705"/>
        <dbReference type="ChEBI" id="CHEBI:58223"/>
        <dbReference type="ChEBI" id="CHEBI:61387"/>
        <dbReference type="ChEBI" id="CHEBI:61388"/>
        <dbReference type="EC" id="2.4.1.227"/>
    </reaction>
</comment>
<comment type="pathway">
    <text evidence="1">Cell wall biogenesis; peptidoglycan biosynthesis.</text>
</comment>
<comment type="subcellular location">
    <subcellularLocation>
        <location evidence="1">Cell membrane</location>
        <topology evidence="1">Peripheral membrane protein</topology>
        <orientation evidence="1">Cytoplasmic side</orientation>
    </subcellularLocation>
</comment>
<comment type="similarity">
    <text evidence="1">Belongs to the glycosyltransferase 28 family. MurG subfamily.</text>
</comment>
<evidence type="ECO:0000255" key="1">
    <source>
        <dbReference type="HAMAP-Rule" id="MF_00033"/>
    </source>
</evidence>
<proteinExistence type="inferred from homology"/>
<gene>
    <name evidence="1" type="primary">murG</name>
    <name type="ordered locus">SCO2084</name>
    <name type="ORF">SC4A10.17c</name>
</gene>
<dbReference type="EC" id="2.4.1.227" evidence="1"/>
<dbReference type="EMBL" id="U10879">
    <property type="protein sequence ID" value="AAD10537.1"/>
    <property type="molecule type" value="Genomic_DNA"/>
</dbReference>
<dbReference type="EMBL" id="AL939111">
    <property type="protein sequence ID" value="CAB51993.1"/>
    <property type="molecule type" value="Genomic_DNA"/>
</dbReference>
<dbReference type="PIR" id="T34954">
    <property type="entry name" value="T34954"/>
</dbReference>
<dbReference type="RefSeq" id="NP_626343.1">
    <property type="nucleotide sequence ID" value="NC_003888.3"/>
</dbReference>
<dbReference type="RefSeq" id="WP_003976731.1">
    <property type="nucleotide sequence ID" value="NZ_VNID01000001.1"/>
</dbReference>
<dbReference type="SMR" id="Q9ZBA5"/>
<dbReference type="FunCoup" id="Q9ZBA5">
    <property type="interactions" value="78"/>
</dbReference>
<dbReference type="STRING" id="100226.gene:17759682"/>
<dbReference type="CAZy" id="GT28">
    <property type="family name" value="Glycosyltransferase Family 28"/>
</dbReference>
<dbReference type="PaxDb" id="100226-SCO2084"/>
<dbReference type="GeneID" id="91386922"/>
<dbReference type="KEGG" id="sco:SCO2084"/>
<dbReference type="PATRIC" id="fig|100226.15.peg.2117"/>
<dbReference type="eggNOG" id="COG0707">
    <property type="taxonomic scope" value="Bacteria"/>
</dbReference>
<dbReference type="HOGENOM" id="CLU_037404_1_0_11"/>
<dbReference type="InParanoid" id="Q9ZBA5"/>
<dbReference type="OrthoDB" id="9808936at2"/>
<dbReference type="PhylomeDB" id="Q9ZBA5"/>
<dbReference type="UniPathway" id="UPA00219"/>
<dbReference type="Proteomes" id="UP000001973">
    <property type="component" value="Chromosome"/>
</dbReference>
<dbReference type="GO" id="GO:0005886">
    <property type="term" value="C:plasma membrane"/>
    <property type="evidence" value="ECO:0007669"/>
    <property type="project" value="UniProtKB-SubCell"/>
</dbReference>
<dbReference type="GO" id="GO:0016757">
    <property type="term" value="F:glycosyltransferase activity"/>
    <property type="evidence" value="ECO:0000318"/>
    <property type="project" value="GO_Central"/>
</dbReference>
<dbReference type="GO" id="GO:0051991">
    <property type="term" value="F:UDP-N-acetyl-D-glucosamine:N-acetylmuramoyl-L-alanyl-D-glutamyl-meso-2,6-diaminopimelyl-D-alanyl-D-alanine-diphosphoundecaprenol 4-beta-N-acetylglucosaminlytransferase activity"/>
    <property type="evidence" value="ECO:0007669"/>
    <property type="project" value="RHEA"/>
</dbReference>
<dbReference type="GO" id="GO:0050511">
    <property type="term" value="F:undecaprenyldiphospho-muramoylpentapeptide beta-N-acetylglucosaminyltransferase activity"/>
    <property type="evidence" value="ECO:0007669"/>
    <property type="project" value="UniProtKB-UniRule"/>
</dbReference>
<dbReference type="GO" id="GO:0005975">
    <property type="term" value="P:carbohydrate metabolic process"/>
    <property type="evidence" value="ECO:0007669"/>
    <property type="project" value="InterPro"/>
</dbReference>
<dbReference type="GO" id="GO:0051301">
    <property type="term" value="P:cell division"/>
    <property type="evidence" value="ECO:0007669"/>
    <property type="project" value="UniProtKB-KW"/>
</dbReference>
<dbReference type="GO" id="GO:0071555">
    <property type="term" value="P:cell wall organization"/>
    <property type="evidence" value="ECO:0007669"/>
    <property type="project" value="UniProtKB-KW"/>
</dbReference>
<dbReference type="GO" id="GO:0030259">
    <property type="term" value="P:lipid glycosylation"/>
    <property type="evidence" value="ECO:0007669"/>
    <property type="project" value="UniProtKB-UniRule"/>
</dbReference>
<dbReference type="GO" id="GO:0009252">
    <property type="term" value="P:peptidoglycan biosynthetic process"/>
    <property type="evidence" value="ECO:0007669"/>
    <property type="project" value="UniProtKB-UniRule"/>
</dbReference>
<dbReference type="GO" id="GO:0008360">
    <property type="term" value="P:regulation of cell shape"/>
    <property type="evidence" value="ECO:0007669"/>
    <property type="project" value="UniProtKB-KW"/>
</dbReference>
<dbReference type="CDD" id="cd03785">
    <property type="entry name" value="GT28_MurG"/>
    <property type="match status" value="1"/>
</dbReference>
<dbReference type="Gene3D" id="3.40.50.2000">
    <property type="entry name" value="Glycogen Phosphorylase B"/>
    <property type="match status" value="2"/>
</dbReference>
<dbReference type="HAMAP" id="MF_00033">
    <property type="entry name" value="MurG"/>
    <property type="match status" value="1"/>
</dbReference>
<dbReference type="InterPro" id="IPR006009">
    <property type="entry name" value="GlcNAc_MurG"/>
</dbReference>
<dbReference type="InterPro" id="IPR007235">
    <property type="entry name" value="Glyco_trans_28_C"/>
</dbReference>
<dbReference type="InterPro" id="IPR004276">
    <property type="entry name" value="GlycoTrans_28_N"/>
</dbReference>
<dbReference type="NCBIfam" id="TIGR01133">
    <property type="entry name" value="murG"/>
    <property type="match status" value="1"/>
</dbReference>
<dbReference type="PANTHER" id="PTHR21015:SF22">
    <property type="entry name" value="GLYCOSYLTRANSFERASE"/>
    <property type="match status" value="1"/>
</dbReference>
<dbReference type="PANTHER" id="PTHR21015">
    <property type="entry name" value="UDP-N-ACETYLGLUCOSAMINE--N-ACETYLMURAMYL-(PENTAPEPTIDE) PYROPHOSPHORYL-UNDECAPRENOL N-ACETYLGLUCOSAMINE TRANSFERASE 1"/>
    <property type="match status" value="1"/>
</dbReference>
<dbReference type="Pfam" id="PF04101">
    <property type="entry name" value="Glyco_tran_28_C"/>
    <property type="match status" value="1"/>
</dbReference>
<dbReference type="Pfam" id="PF03033">
    <property type="entry name" value="Glyco_transf_28"/>
    <property type="match status" value="1"/>
</dbReference>
<dbReference type="SUPFAM" id="SSF53756">
    <property type="entry name" value="UDP-Glycosyltransferase/glycogen phosphorylase"/>
    <property type="match status" value="1"/>
</dbReference>
<accession>Q9ZBA5</accession>
<feature type="chain" id="PRO_0000109220" description="UDP-N-acetylglucosamine--N-acetylmuramyl-(pentapeptide) pyrophosphoryl-undecaprenol N-acetylglucosamine transferase">
    <location>
        <begin position="1"/>
        <end position="364"/>
    </location>
</feature>
<feature type="binding site" evidence="1">
    <location>
        <begin position="10"/>
        <end position="12"/>
    </location>
    <ligand>
        <name>UDP-N-acetyl-alpha-D-glucosamine</name>
        <dbReference type="ChEBI" id="CHEBI:57705"/>
    </ligand>
</feature>
<feature type="binding site" evidence="1">
    <location>
        <position position="124"/>
    </location>
    <ligand>
        <name>UDP-N-acetyl-alpha-D-glucosamine</name>
        <dbReference type="ChEBI" id="CHEBI:57705"/>
    </ligand>
</feature>
<feature type="binding site" evidence="1">
    <location>
        <position position="161"/>
    </location>
    <ligand>
        <name>UDP-N-acetyl-alpha-D-glucosamine</name>
        <dbReference type="ChEBI" id="CHEBI:57705"/>
    </ligand>
</feature>
<feature type="binding site" evidence="1">
    <location>
        <position position="195"/>
    </location>
    <ligand>
        <name>UDP-N-acetyl-alpha-D-glucosamine</name>
        <dbReference type="ChEBI" id="CHEBI:57705"/>
    </ligand>
</feature>
<feature type="binding site" evidence="1">
    <location>
        <position position="291"/>
    </location>
    <ligand>
        <name>UDP-N-acetyl-alpha-D-glucosamine</name>
        <dbReference type="ChEBI" id="CHEBI:57705"/>
    </ligand>
</feature>
<organism>
    <name type="scientific">Streptomyces coelicolor (strain ATCC BAA-471 / A3(2) / M145)</name>
    <dbReference type="NCBI Taxonomy" id="100226"/>
    <lineage>
        <taxon>Bacteria</taxon>
        <taxon>Bacillati</taxon>
        <taxon>Actinomycetota</taxon>
        <taxon>Actinomycetes</taxon>
        <taxon>Kitasatosporales</taxon>
        <taxon>Streptomycetaceae</taxon>
        <taxon>Streptomyces</taxon>
        <taxon>Streptomyces albidoflavus group</taxon>
    </lineage>
</organism>